<gene>
    <name evidence="1" type="primary">nagK</name>
    <name type="ordered locus">VP1494</name>
</gene>
<organism>
    <name type="scientific">Vibrio parahaemolyticus serotype O3:K6 (strain RIMD 2210633)</name>
    <dbReference type="NCBI Taxonomy" id="223926"/>
    <lineage>
        <taxon>Bacteria</taxon>
        <taxon>Pseudomonadati</taxon>
        <taxon>Pseudomonadota</taxon>
        <taxon>Gammaproteobacteria</taxon>
        <taxon>Vibrionales</taxon>
        <taxon>Vibrionaceae</taxon>
        <taxon>Vibrio</taxon>
    </lineage>
</organism>
<dbReference type="EC" id="2.7.1.59" evidence="1"/>
<dbReference type="EMBL" id="BA000031">
    <property type="protein sequence ID" value="BAC59757.1"/>
    <property type="molecule type" value="Genomic_DNA"/>
</dbReference>
<dbReference type="RefSeq" id="NP_797873.1">
    <property type="nucleotide sequence ID" value="NC_004603.1"/>
</dbReference>
<dbReference type="RefSeq" id="WP_005453903.1">
    <property type="nucleotide sequence ID" value="NC_004603.1"/>
</dbReference>
<dbReference type="SMR" id="Q87PK8"/>
<dbReference type="GeneID" id="1189001"/>
<dbReference type="KEGG" id="vpa:VP1494"/>
<dbReference type="PATRIC" id="fig|223926.6.peg.1427"/>
<dbReference type="eggNOG" id="COG1940">
    <property type="taxonomic scope" value="Bacteria"/>
</dbReference>
<dbReference type="HOGENOM" id="CLU_036604_0_3_6"/>
<dbReference type="UniPathway" id="UPA00544"/>
<dbReference type="Proteomes" id="UP000002493">
    <property type="component" value="Chromosome 1"/>
</dbReference>
<dbReference type="GO" id="GO:0005524">
    <property type="term" value="F:ATP binding"/>
    <property type="evidence" value="ECO:0007669"/>
    <property type="project" value="UniProtKB-UniRule"/>
</dbReference>
<dbReference type="GO" id="GO:0045127">
    <property type="term" value="F:N-acetylglucosamine kinase activity"/>
    <property type="evidence" value="ECO:0007669"/>
    <property type="project" value="UniProtKB-UniRule"/>
</dbReference>
<dbReference type="GO" id="GO:0008270">
    <property type="term" value="F:zinc ion binding"/>
    <property type="evidence" value="ECO:0007669"/>
    <property type="project" value="UniProtKB-UniRule"/>
</dbReference>
<dbReference type="GO" id="GO:0006044">
    <property type="term" value="P:N-acetylglucosamine metabolic process"/>
    <property type="evidence" value="ECO:0007669"/>
    <property type="project" value="UniProtKB-UniRule"/>
</dbReference>
<dbReference type="GO" id="GO:0009254">
    <property type="term" value="P:peptidoglycan turnover"/>
    <property type="evidence" value="ECO:0007669"/>
    <property type="project" value="UniProtKB-UniRule"/>
</dbReference>
<dbReference type="CDD" id="cd24057">
    <property type="entry name" value="ASKHA_NBD_ROK_NAGK"/>
    <property type="match status" value="1"/>
</dbReference>
<dbReference type="FunFam" id="3.30.420.40:FF:000049">
    <property type="entry name" value="N-acetyl-D-glucosamine kinase"/>
    <property type="match status" value="1"/>
</dbReference>
<dbReference type="Gene3D" id="3.30.420.40">
    <property type="match status" value="2"/>
</dbReference>
<dbReference type="HAMAP" id="MF_01271">
    <property type="entry name" value="GlcNAc_kinase"/>
    <property type="match status" value="1"/>
</dbReference>
<dbReference type="InterPro" id="IPR043129">
    <property type="entry name" value="ATPase_NBD"/>
</dbReference>
<dbReference type="InterPro" id="IPR023505">
    <property type="entry name" value="N-acetyl-D-glucosamine_kinase"/>
</dbReference>
<dbReference type="InterPro" id="IPR000600">
    <property type="entry name" value="ROK"/>
</dbReference>
<dbReference type="InterPro" id="IPR049874">
    <property type="entry name" value="ROK_cs"/>
</dbReference>
<dbReference type="NCBIfam" id="NF009835">
    <property type="entry name" value="PRK13310.1"/>
    <property type="match status" value="1"/>
</dbReference>
<dbReference type="PANTHER" id="PTHR18964:SF162">
    <property type="entry name" value="N-ACETYL-D-GLUCOSAMINE KINASE"/>
    <property type="match status" value="1"/>
</dbReference>
<dbReference type="PANTHER" id="PTHR18964">
    <property type="entry name" value="ROK (REPRESSOR, ORF, KINASE) FAMILY"/>
    <property type="match status" value="1"/>
</dbReference>
<dbReference type="Pfam" id="PF00480">
    <property type="entry name" value="ROK"/>
    <property type="match status" value="1"/>
</dbReference>
<dbReference type="SUPFAM" id="SSF53067">
    <property type="entry name" value="Actin-like ATPase domain"/>
    <property type="match status" value="1"/>
</dbReference>
<dbReference type="PROSITE" id="PS01125">
    <property type="entry name" value="ROK"/>
    <property type="match status" value="1"/>
</dbReference>
<accession>Q87PK8</accession>
<name>NAGK_VIBPA</name>
<reference key="1">
    <citation type="journal article" date="2003" name="Lancet">
        <title>Genome sequence of Vibrio parahaemolyticus: a pathogenic mechanism distinct from that of V. cholerae.</title>
        <authorList>
            <person name="Makino K."/>
            <person name="Oshima K."/>
            <person name="Kurokawa K."/>
            <person name="Yokoyama K."/>
            <person name="Uda T."/>
            <person name="Tagomori K."/>
            <person name="Iijima Y."/>
            <person name="Najima M."/>
            <person name="Nakano M."/>
            <person name="Yamashita A."/>
            <person name="Kubota Y."/>
            <person name="Kimura S."/>
            <person name="Yasunaga T."/>
            <person name="Honda T."/>
            <person name="Shinagawa H."/>
            <person name="Hattori M."/>
            <person name="Iida T."/>
        </authorList>
    </citation>
    <scope>NUCLEOTIDE SEQUENCE [LARGE SCALE GENOMIC DNA]</scope>
    <source>
        <strain>RIMD 2210633</strain>
    </source>
</reference>
<protein>
    <recommendedName>
        <fullName evidence="1">N-acetyl-D-glucosamine kinase</fullName>
        <ecNumber evidence="1">2.7.1.59</ecNumber>
    </recommendedName>
    <alternativeName>
        <fullName evidence="1">GlcNAc kinase</fullName>
    </alternativeName>
</protein>
<comment type="function">
    <text evidence="1">Catalyzes the phosphorylation of N-acetyl-D-glucosamine (GlcNAc) derived from cell-wall degradation, yielding GlcNAc-6-P.</text>
</comment>
<comment type="catalytic activity">
    <reaction evidence="1">
        <text>N-acetyl-D-glucosamine + ATP = N-acetyl-D-glucosamine 6-phosphate + ADP + H(+)</text>
        <dbReference type="Rhea" id="RHEA:17417"/>
        <dbReference type="ChEBI" id="CHEBI:15378"/>
        <dbReference type="ChEBI" id="CHEBI:30616"/>
        <dbReference type="ChEBI" id="CHEBI:57513"/>
        <dbReference type="ChEBI" id="CHEBI:456216"/>
        <dbReference type="ChEBI" id="CHEBI:506227"/>
        <dbReference type="EC" id="2.7.1.59"/>
    </reaction>
</comment>
<comment type="pathway">
    <text evidence="1">Cell wall biogenesis; peptidoglycan recycling.</text>
</comment>
<comment type="similarity">
    <text evidence="1">Belongs to the ROK (NagC/XylR) family. NagK subfamily.</text>
</comment>
<proteinExistence type="inferred from homology"/>
<keyword id="KW-0067">ATP-binding</keyword>
<keyword id="KW-0119">Carbohydrate metabolism</keyword>
<keyword id="KW-0418">Kinase</keyword>
<keyword id="KW-0479">Metal-binding</keyword>
<keyword id="KW-0547">Nucleotide-binding</keyword>
<keyword id="KW-0808">Transferase</keyword>
<keyword id="KW-0862">Zinc</keyword>
<sequence length="302" mass="32775">MYYGFDVGGTKIEFGAFNEKLERVATERVPTPTDNYELLVDTIAELVNKYDAEFGCEGTIGLGLPGMEDADDATVLTVNVPAAKGKPLRADLEAKIGRSVKIENDANCFALSEAWDEELQDEPSVLGLILGTGFGGGFIYDGKVFSGRNHVAGEVGHTRLPIDAWFHLGENAPLLGCGCDKKGCLDSYLSGRGFELLYAHYYGEEKKAIDIIKAHAEGEAKAVEHVERFMELLAICFANIFTATDPHVVVLGGGLSNFELIYEEMPKRIPKYLLSVAKCPKIIKAKHGDSGGVRGAAFLHIK</sequence>
<evidence type="ECO:0000255" key="1">
    <source>
        <dbReference type="HAMAP-Rule" id="MF_01271"/>
    </source>
</evidence>
<feature type="chain" id="PRO_0000270121" description="N-acetyl-D-glucosamine kinase">
    <location>
        <begin position="1"/>
        <end position="302"/>
    </location>
</feature>
<feature type="binding site" evidence="1">
    <location>
        <begin position="4"/>
        <end position="11"/>
    </location>
    <ligand>
        <name>ATP</name>
        <dbReference type="ChEBI" id="CHEBI:30616"/>
    </ligand>
</feature>
<feature type="binding site" evidence="1">
    <location>
        <begin position="133"/>
        <end position="140"/>
    </location>
    <ligand>
        <name>ATP</name>
        <dbReference type="ChEBI" id="CHEBI:30616"/>
    </ligand>
</feature>
<feature type="binding site" evidence="1">
    <location>
        <position position="157"/>
    </location>
    <ligand>
        <name>Zn(2+)</name>
        <dbReference type="ChEBI" id="CHEBI:29105"/>
    </ligand>
</feature>
<feature type="binding site" evidence="1">
    <location>
        <position position="177"/>
    </location>
    <ligand>
        <name>Zn(2+)</name>
        <dbReference type="ChEBI" id="CHEBI:29105"/>
    </ligand>
</feature>
<feature type="binding site" evidence="1">
    <location>
        <position position="179"/>
    </location>
    <ligand>
        <name>Zn(2+)</name>
        <dbReference type="ChEBI" id="CHEBI:29105"/>
    </ligand>
</feature>
<feature type="binding site" evidence="1">
    <location>
        <position position="184"/>
    </location>
    <ligand>
        <name>Zn(2+)</name>
        <dbReference type="ChEBI" id="CHEBI:29105"/>
    </ligand>
</feature>